<name>NARV_ECOLI</name>
<comment type="function">
    <text>This is a second nitrate reductase enzyme which can substitute for the NRA enzyme and allows E.coli to use nitrate as an electron acceptor during anaerobic growth. The gamma chain is a membrane-embedded heme-iron unit resembling cytochrome b, which transfers electrons from quinones to the beta subunit.</text>
</comment>
<comment type="catalytic activity">
    <reaction>
        <text>nitrate + a quinol = a quinone + nitrite + H2O</text>
        <dbReference type="Rhea" id="RHEA:56144"/>
        <dbReference type="ChEBI" id="CHEBI:15377"/>
        <dbReference type="ChEBI" id="CHEBI:16301"/>
        <dbReference type="ChEBI" id="CHEBI:17632"/>
        <dbReference type="ChEBI" id="CHEBI:24646"/>
        <dbReference type="ChEBI" id="CHEBI:132124"/>
        <dbReference type="EC" id="1.7.5.1"/>
    </reaction>
</comment>
<comment type="cofactor">
    <cofactor evidence="1">
        <name>heme</name>
        <dbReference type="ChEBI" id="CHEBI:30413"/>
    </cofactor>
    <text evidence="1">Binds 2 heme groups per subunit. Heme 1 is located at the cytoplasmic interface, heme 2 is located at the periplasmic interface. Electrons are transferred from the periplasmic to the cytoplasmic heme.</text>
</comment>
<comment type="subunit">
    <text>Dimer of heterotrimers each composed of an alpha, a beta and a gamma chain. Alpha and beta are catalytic chains; gamma chains are involved in binding the enzyme complex to the cytoplasmic membrane.</text>
</comment>
<comment type="subcellular location">
    <subcellularLocation>
        <location>Cell inner membrane</location>
        <topology>Multi-pass membrane protein</topology>
    </subcellularLocation>
</comment>
<accession>P0AF32</accession>
<accession>P19316</accession>
<gene>
    <name type="primary">narV</name>
    <name type="ordered locus">b1465</name>
    <name type="ordered locus">JW1460</name>
</gene>
<organism>
    <name type="scientific">Escherichia coli (strain K12)</name>
    <dbReference type="NCBI Taxonomy" id="83333"/>
    <lineage>
        <taxon>Bacteria</taxon>
        <taxon>Pseudomonadati</taxon>
        <taxon>Pseudomonadota</taxon>
        <taxon>Gammaproteobacteria</taxon>
        <taxon>Enterobacterales</taxon>
        <taxon>Enterobacteriaceae</taxon>
        <taxon>Escherichia</taxon>
    </lineage>
</organism>
<reference key="1">
    <citation type="journal article" date="1990" name="Mol. Gen. Genet.">
        <title>Nitrate reductases of Escherichia coli: sequence of the second nitrate reductase and comparison with that encoded by the narGHJI operon.</title>
        <authorList>
            <person name="Blasco F."/>
            <person name="Iobbi C."/>
            <person name="Ratouchniak J."/>
            <person name="Bonnefoy V."/>
            <person name="Chippaux M."/>
        </authorList>
    </citation>
    <scope>NUCLEOTIDE SEQUENCE [GENOMIC DNA]</scope>
</reference>
<reference key="2">
    <citation type="journal article" date="1996" name="DNA Res.">
        <title>A 570-kb DNA sequence of the Escherichia coli K-12 genome corresponding to the 28.0-40.1 min region on the linkage map.</title>
        <authorList>
            <person name="Aiba H."/>
            <person name="Baba T."/>
            <person name="Fujita K."/>
            <person name="Hayashi K."/>
            <person name="Inada T."/>
            <person name="Isono K."/>
            <person name="Itoh T."/>
            <person name="Kasai H."/>
            <person name="Kashimoto K."/>
            <person name="Kimura S."/>
            <person name="Kitakawa M."/>
            <person name="Kitagawa M."/>
            <person name="Makino K."/>
            <person name="Miki T."/>
            <person name="Mizobuchi K."/>
            <person name="Mori H."/>
            <person name="Mori T."/>
            <person name="Motomura K."/>
            <person name="Nakade S."/>
            <person name="Nakamura Y."/>
            <person name="Nashimoto H."/>
            <person name="Nishio Y."/>
            <person name="Oshima T."/>
            <person name="Saito N."/>
            <person name="Sampei G."/>
            <person name="Seki Y."/>
            <person name="Sivasundaram S."/>
            <person name="Tagami H."/>
            <person name="Takeda J."/>
            <person name="Takemoto K."/>
            <person name="Takeuchi Y."/>
            <person name="Wada C."/>
            <person name="Yamamoto Y."/>
            <person name="Horiuchi T."/>
        </authorList>
    </citation>
    <scope>NUCLEOTIDE SEQUENCE [LARGE SCALE GENOMIC DNA]</scope>
    <source>
        <strain>K12 / W3110 / ATCC 27325 / DSM 5911</strain>
    </source>
</reference>
<reference key="3">
    <citation type="journal article" date="1997" name="Science">
        <title>The complete genome sequence of Escherichia coli K-12.</title>
        <authorList>
            <person name="Blattner F.R."/>
            <person name="Plunkett G. III"/>
            <person name="Bloch C.A."/>
            <person name="Perna N.T."/>
            <person name="Burland V."/>
            <person name="Riley M."/>
            <person name="Collado-Vides J."/>
            <person name="Glasner J.D."/>
            <person name="Rode C.K."/>
            <person name="Mayhew G.F."/>
            <person name="Gregor J."/>
            <person name="Davis N.W."/>
            <person name="Kirkpatrick H.A."/>
            <person name="Goeden M.A."/>
            <person name="Rose D.J."/>
            <person name="Mau B."/>
            <person name="Shao Y."/>
        </authorList>
    </citation>
    <scope>NUCLEOTIDE SEQUENCE [LARGE SCALE GENOMIC DNA]</scope>
    <source>
        <strain>K12 / MG1655 / ATCC 47076</strain>
    </source>
</reference>
<reference key="4">
    <citation type="journal article" date="2006" name="Mol. Syst. Biol.">
        <title>Highly accurate genome sequences of Escherichia coli K-12 strains MG1655 and W3110.</title>
        <authorList>
            <person name="Hayashi K."/>
            <person name="Morooka N."/>
            <person name="Yamamoto Y."/>
            <person name="Fujita K."/>
            <person name="Isono K."/>
            <person name="Choi S."/>
            <person name="Ohtsubo E."/>
            <person name="Baba T."/>
            <person name="Wanner B.L."/>
            <person name="Mori H."/>
            <person name="Horiuchi T."/>
        </authorList>
    </citation>
    <scope>NUCLEOTIDE SEQUENCE [LARGE SCALE GENOMIC DNA]</scope>
    <source>
        <strain>K12 / W3110 / ATCC 27325 / DSM 5911</strain>
    </source>
</reference>
<reference key="5">
    <citation type="journal article" date="2005" name="Science">
        <title>Global topology analysis of the Escherichia coli inner membrane proteome.</title>
        <authorList>
            <person name="Daley D.O."/>
            <person name="Rapp M."/>
            <person name="Granseth E."/>
            <person name="Melen K."/>
            <person name="Drew D."/>
            <person name="von Heijne G."/>
        </authorList>
    </citation>
    <scope>TOPOLOGY [LARGE SCALE ANALYSIS]</scope>
    <source>
        <strain>K12 / MG1655 / ATCC 47076</strain>
    </source>
</reference>
<dbReference type="EC" id="1.7.5.1"/>
<dbReference type="EMBL" id="X17110">
    <property type="protein sequence ID" value="CAA34967.1"/>
    <property type="molecule type" value="Genomic_DNA"/>
</dbReference>
<dbReference type="EMBL" id="U00096">
    <property type="protein sequence ID" value="AAC74547.1"/>
    <property type="molecule type" value="Genomic_DNA"/>
</dbReference>
<dbReference type="EMBL" id="AP009048">
    <property type="protein sequence ID" value="BAA15102.1"/>
    <property type="molecule type" value="Genomic_DNA"/>
</dbReference>
<dbReference type="PIR" id="S11430">
    <property type="entry name" value="S11430"/>
</dbReference>
<dbReference type="RefSeq" id="NP_415982.1">
    <property type="nucleotide sequence ID" value="NC_000913.3"/>
</dbReference>
<dbReference type="SMR" id="P0AF32"/>
<dbReference type="BioGRID" id="4263337">
    <property type="interactions" value="14"/>
</dbReference>
<dbReference type="ComplexPortal" id="CPX-5581">
    <property type="entry name" value="Nitrate reductase Z complex"/>
</dbReference>
<dbReference type="FunCoup" id="P0AF32">
    <property type="interactions" value="189"/>
</dbReference>
<dbReference type="STRING" id="511145.b1465"/>
<dbReference type="TCDB" id="5.A.3.1.2">
    <property type="family name" value="the prokaryotic molybdopterin-containing oxidoreductase (pmo) family"/>
</dbReference>
<dbReference type="jPOST" id="P0AF32"/>
<dbReference type="PaxDb" id="511145-b1465"/>
<dbReference type="EnsemblBacteria" id="AAC74547">
    <property type="protein sequence ID" value="AAC74547"/>
    <property type="gene ID" value="b1465"/>
</dbReference>
<dbReference type="GeneID" id="946029"/>
<dbReference type="KEGG" id="ecj:JW1460"/>
<dbReference type="KEGG" id="eco:b1465"/>
<dbReference type="KEGG" id="ecoc:C3026_08505"/>
<dbReference type="PATRIC" id="fig|1411691.4.peg.803"/>
<dbReference type="EchoBASE" id="EB0638"/>
<dbReference type="eggNOG" id="COG2181">
    <property type="taxonomic scope" value="Bacteria"/>
</dbReference>
<dbReference type="HOGENOM" id="CLU_092378_1_0_6"/>
<dbReference type="InParanoid" id="P0AF32"/>
<dbReference type="OMA" id="FLPMSQK"/>
<dbReference type="OrthoDB" id="9788113at2"/>
<dbReference type="PhylomeDB" id="P0AF32"/>
<dbReference type="BioCyc" id="EcoCyc:NARV-MONOMER"/>
<dbReference type="BioCyc" id="MetaCyc:NARV-MONOMER"/>
<dbReference type="PHI-base" id="PHI:10519"/>
<dbReference type="PRO" id="PR:P0AF32"/>
<dbReference type="Proteomes" id="UP000000625">
    <property type="component" value="Chromosome"/>
</dbReference>
<dbReference type="GO" id="GO:0016020">
    <property type="term" value="C:membrane"/>
    <property type="evidence" value="ECO:0000314"/>
    <property type="project" value="ComplexPortal"/>
</dbReference>
<dbReference type="GO" id="GO:0009325">
    <property type="term" value="C:nitrate reductase complex"/>
    <property type="evidence" value="ECO:0000353"/>
    <property type="project" value="ComplexPortal"/>
</dbReference>
<dbReference type="GO" id="GO:0005886">
    <property type="term" value="C:plasma membrane"/>
    <property type="evidence" value="ECO:0000314"/>
    <property type="project" value="EcoCyc"/>
</dbReference>
<dbReference type="GO" id="GO:0009055">
    <property type="term" value="F:electron transfer activity"/>
    <property type="evidence" value="ECO:0000318"/>
    <property type="project" value="GO_Central"/>
</dbReference>
<dbReference type="GO" id="GO:0020037">
    <property type="term" value="F:heme binding"/>
    <property type="evidence" value="ECO:0000255"/>
    <property type="project" value="EcoCyc"/>
</dbReference>
<dbReference type="GO" id="GO:0046872">
    <property type="term" value="F:metal ion binding"/>
    <property type="evidence" value="ECO:0007669"/>
    <property type="project" value="UniProtKB-KW"/>
</dbReference>
<dbReference type="GO" id="GO:0160182">
    <property type="term" value="F:nitrate reductase (quinone) activity"/>
    <property type="evidence" value="ECO:0007669"/>
    <property type="project" value="UniProtKB-EC"/>
</dbReference>
<dbReference type="GO" id="GO:0008940">
    <property type="term" value="F:nitrate reductase activity"/>
    <property type="evidence" value="ECO:0000314"/>
    <property type="project" value="EcoCyc"/>
</dbReference>
<dbReference type="GO" id="GO:0019645">
    <property type="term" value="P:anaerobic electron transport chain"/>
    <property type="evidence" value="ECO:0000314"/>
    <property type="project" value="EcoCyc"/>
</dbReference>
<dbReference type="GO" id="GO:0009061">
    <property type="term" value="P:anaerobic respiration"/>
    <property type="evidence" value="ECO:0000314"/>
    <property type="project" value="EcoCyc"/>
</dbReference>
<dbReference type="GO" id="GO:0042128">
    <property type="term" value="P:nitrate assimilation"/>
    <property type="evidence" value="ECO:0007669"/>
    <property type="project" value="UniProtKB-KW"/>
</dbReference>
<dbReference type="GO" id="GO:0042126">
    <property type="term" value="P:nitrate metabolic process"/>
    <property type="evidence" value="ECO:0000303"/>
    <property type="project" value="ComplexPortal"/>
</dbReference>
<dbReference type="FunFam" id="1.20.950.20:FF:000001">
    <property type="entry name" value="Respiratory nitrate reductase subunit gamma"/>
    <property type="match status" value="1"/>
</dbReference>
<dbReference type="Gene3D" id="1.20.950.20">
    <property type="entry name" value="Transmembrane di-heme cytochromes, Chain C"/>
    <property type="match status" value="1"/>
</dbReference>
<dbReference type="InterPro" id="IPR051936">
    <property type="entry name" value="Heme-iron_electron_transfer"/>
</dbReference>
<dbReference type="InterPro" id="IPR023234">
    <property type="entry name" value="NarG-like_domain"/>
</dbReference>
<dbReference type="InterPro" id="IPR036197">
    <property type="entry name" value="NarG-like_sf"/>
</dbReference>
<dbReference type="InterPro" id="IPR003816">
    <property type="entry name" value="Nitrate_red_gam"/>
</dbReference>
<dbReference type="NCBIfam" id="TIGR00351">
    <property type="entry name" value="narI"/>
    <property type="match status" value="1"/>
</dbReference>
<dbReference type="PANTHER" id="PTHR30598">
    <property type="entry name" value="NITRATE REDUCTASE PRIVATE CHAPERONE, REDOX ENZYME MATURATION PROTEIN REMP FAMILY"/>
    <property type="match status" value="1"/>
</dbReference>
<dbReference type="PANTHER" id="PTHR30598:SF4">
    <property type="entry name" value="RESPIRATORY NITRATE REDUCTASE 2 GAMMA CHAIN"/>
    <property type="match status" value="1"/>
</dbReference>
<dbReference type="Pfam" id="PF02665">
    <property type="entry name" value="Nitrate_red_gam"/>
    <property type="match status" value="1"/>
</dbReference>
<dbReference type="SUPFAM" id="SSF103501">
    <property type="entry name" value="Respiratory nitrate reductase 1 gamma chain"/>
    <property type="match status" value="1"/>
</dbReference>
<protein>
    <recommendedName>
        <fullName>Respiratory nitrate reductase 2 gamma chain</fullName>
        <ecNumber>1.7.5.1</ecNumber>
    </recommendedName>
</protein>
<evidence type="ECO:0000250" key="1"/>
<keyword id="KW-0997">Cell inner membrane</keyword>
<keyword id="KW-1003">Cell membrane</keyword>
<keyword id="KW-0249">Electron transport</keyword>
<keyword id="KW-0349">Heme</keyword>
<keyword id="KW-0408">Iron</keyword>
<keyword id="KW-0472">Membrane</keyword>
<keyword id="KW-0479">Metal-binding</keyword>
<keyword id="KW-0534">Nitrate assimilation</keyword>
<keyword id="KW-0560">Oxidoreductase</keyword>
<keyword id="KW-1185">Reference proteome</keyword>
<keyword id="KW-0812">Transmembrane</keyword>
<keyword id="KW-1133">Transmembrane helix</keyword>
<keyword id="KW-0813">Transport</keyword>
<feature type="chain" id="PRO_0000096731" description="Respiratory nitrate reductase 2 gamma chain">
    <location>
        <begin position="1"/>
        <end position="226"/>
    </location>
</feature>
<feature type="topological domain" description="Periplasmic" evidence="1">
    <location>
        <begin position="1"/>
        <end position="4"/>
    </location>
</feature>
<feature type="transmembrane region" description="Helical; Name=1" evidence="1">
    <location>
        <begin position="5"/>
        <end position="30"/>
    </location>
</feature>
<feature type="topological domain" description="Cytoplasmic" evidence="1">
    <location>
        <begin position="31"/>
        <end position="48"/>
    </location>
</feature>
<feature type="transmembrane region" description="Helical; Name=2" evidence="1">
    <location>
        <begin position="49"/>
        <end position="71"/>
    </location>
</feature>
<feature type="topological domain" description="Periplasmic" evidence="1">
    <location>
        <begin position="72"/>
        <end position="83"/>
    </location>
</feature>
<feature type="transmembrane region" description="Helical; Name=3" evidence="1">
    <location>
        <begin position="84"/>
        <end position="113"/>
    </location>
</feature>
<feature type="topological domain" description="Cytoplasmic" evidence="1">
    <location>
        <begin position="114"/>
        <end position="125"/>
    </location>
</feature>
<feature type="transmembrane region" description="Helical; Name=4" evidence="1">
    <location>
        <begin position="126"/>
        <end position="149"/>
    </location>
</feature>
<feature type="topological domain" description="Periplasmic" evidence="1">
    <location>
        <begin position="150"/>
        <end position="183"/>
    </location>
</feature>
<feature type="transmembrane region" description="Helical; Name=5" evidence="1">
    <location>
        <begin position="184"/>
        <end position="199"/>
    </location>
</feature>
<feature type="topological domain" description="Cytoplasmic" evidence="1">
    <location>
        <begin position="200"/>
        <end position="226"/>
    </location>
</feature>
<feature type="binding site" description="axial binding residue" evidence="1">
    <location>
        <position position="57"/>
    </location>
    <ligand>
        <name>heme b</name>
        <dbReference type="ChEBI" id="CHEBI:60344"/>
        <label>1</label>
    </ligand>
    <ligandPart>
        <name>Fe</name>
        <dbReference type="ChEBI" id="CHEBI:18248"/>
    </ligandPart>
</feature>
<feature type="binding site" description="axial binding residue" evidence="1">
    <location>
        <position position="67"/>
    </location>
    <ligand>
        <name>heme b</name>
        <dbReference type="ChEBI" id="CHEBI:60344"/>
        <label>2</label>
    </ligand>
    <ligandPart>
        <name>Fe</name>
        <dbReference type="ChEBI" id="CHEBI:18248"/>
    </ligandPart>
</feature>
<feature type="binding site" description="axial binding residue" evidence="1">
    <location>
        <position position="188"/>
    </location>
    <ligand>
        <name>heme b</name>
        <dbReference type="ChEBI" id="CHEBI:60344"/>
        <label>2</label>
    </ligand>
    <ligandPart>
        <name>Fe</name>
        <dbReference type="ChEBI" id="CHEBI:18248"/>
    </ligandPart>
</feature>
<feature type="binding site" description="axial binding residue" evidence="1">
    <location>
        <position position="206"/>
    </location>
    <ligand>
        <name>heme b</name>
        <dbReference type="ChEBI" id="CHEBI:60344"/>
        <label>1</label>
    </ligand>
    <ligandPart>
        <name>Fe</name>
        <dbReference type="ChEBI" id="CHEBI:18248"/>
    </ligandPart>
</feature>
<proteinExistence type="evidence at protein level"/>
<sequence>MIQYLNVFFYDIYPYICATVFFLGSWLRYDYGQYTWRASSSQMLDKRGMVIWSNLFHIGILGIFFGHLFGMLTPHWMYAWFLPVAAKQLMAMVLGGICGVLTLIGGAGLLWRRLTNQRVRATSTTPDIIIMSILLIQCLLGLSTIPFSAQYPDGSEMMKLVGWAQSIVTFRGGSSEMLNGVAFVFRLHLVLGMTIFLLFPFTRLVHVWSAPFEYFTRRYQIVRSRR</sequence>